<name>THIG_CORA7</name>
<protein>
    <recommendedName>
        <fullName evidence="1">Thiazole synthase</fullName>
        <ecNumber evidence="1">2.8.1.10</ecNumber>
    </recommendedName>
</protein>
<gene>
    <name evidence="1" type="primary">thiG</name>
    <name type="ordered locus">cauri_1577</name>
</gene>
<comment type="function">
    <text evidence="1">Catalyzes the rearrangement of 1-deoxy-D-xylulose 5-phosphate (DXP) to produce the thiazole phosphate moiety of thiamine. Sulfur is provided by the thiocarboxylate moiety of the carrier protein ThiS. In vitro, sulfur can be provided by H(2)S.</text>
</comment>
<comment type="catalytic activity">
    <reaction evidence="1">
        <text>[ThiS sulfur-carrier protein]-C-terminal-Gly-aminoethanethioate + 2-iminoacetate + 1-deoxy-D-xylulose 5-phosphate = [ThiS sulfur-carrier protein]-C-terminal Gly-Gly + 2-[(2R,5Z)-2-carboxy-4-methylthiazol-5(2H)-ylidene]ethyl phosphate + 2 H2O + H(+)</text>
        <dbReference type="Rhea" id="RHEA:26297"/>
        <dbReference type="Rhea" id="RHEA-COMP:12909"/>
        <dbReference type="Rhea" id="RHEA-COMP:19908"/>
        <dbReference type="ChEBI" id="CHEBI:15377"/>
        <dbReference type="ChEBI" id="CHEBI:15378"/>
        <dbReference type="ChEBI" id="CHEBI:57792"/>
        <dbReference type="ChEBI" id="CHEBI:62899"/>
        <dbReference type="ChEBI" id="CHEBI:77846"/>
        <dbReference type="ChEBI" id="CHEBI:90778"/>
        <dbReference type="ChEBI" id="CHEBI:232372"/>
        <dbReference type="EC" id="2.8.1.10"/>
    </reaction>
</comment>
<comment type="pathway">
    <text evidence="1">Cofactor biosynthesis; thiamine diphosphate biosynthesis.</text>
</comment>
<comment type="subunit">
    <text evidence="1">Homotetramer. Forms heterodimers with either ThiH or ThiS.</text>
</comment>
<comment type="subcellular location">
    <subcellularLocation>
        <location evidence="1">Cytoplasm</location>
    </subcellularLocation>
</comment>
<comment type="similarity">
    <text evidence="1">Belongs to the ThiG family.</text>
</comment>
<keyword id="KW-0963">Cytoplasm</keyword>
<keyword id="KW-1185">Reference proteome</keyword>
<keyword id="KW-0704">Schiff base</keyword>
<keyword id="KW-0784">Thiamine biosynthesis</keyword>
<keyword id="KW-0808">Transferase</keyword>
<organism>
    <name type="scientific">Corynebacterium aurimucosum (strain ATCC 700975 / DSM 44827 / CIP 107346 / CN-1)</name>
    <name type="common">Corynebacterium nigricans</name>
    <dbReference type="NCBI Taxonomy" id="548476"/>
    <lineage>
        <taxon>Bacteria</taxon>
        <taxon>Bacillati</taxon>
        <taxon>Actinomycetota</taxon>
        <taxon>Actinomycetes</taxon>
        <taxon>Mycobacteriales</taxon>
        <taxon>Corynebacteriaceae</taxon>
        <taxon>Corynebacterium</taxon>
    </lineage>
</organism>
<reference key="1">
    <citation type="journal article" date="2010" name="BMC Genomics">
        <title>Complete genome sequence and lifestyle of black-pigmented Corynebacterium aurimucosum ATCC 700975 (formerly C. nigricans CN-1) isolated from a vaginal swab of a woman with spontaneous abortion.</title>
        <authorList>
            <person name="Trost E."/>
            <person name="Gotker S."/>
            <person name="Schneider J."/>
            <person name="Schneiker-Bekel S."/>
            <person name="Szczepanowski R."/>
            <person name="Tilker A."/>
            <person name="Viehoever P."/>
            <person name="Arnold W."/>
            <person name="Bekel T."/>
            <person name="Blom J."/>
            <person name="Gartemann K.H."/>
            <person name="Linke B."/>
            <person name="Goesmann A."/>
            <person name="Puhler A."/>
            <person name="Shukla S.K."/>
            <person name="Tauch A."/>
        </authorList>
    </citation>
    <scope>NUCLEOTIDE SEQUENCE [LARGE SCALE GENOMIC DNA]</scope>
    <source>
        <strain>ATCC 700975 / DSM 44827 / CIP 107346 / CN-1</strain>
    </source>
</reference>
<proteinExistence type="inferred from homology"/>
<evidence type="ECO:0000255" key="1">
    <source>
        <dbReference type="HAMAP-Rule" id="MF_00443"/>
    </source>
</evidence>
<sequence>MLTIADTTFSSHLIMGTGGATSHEALERALVASGTELTTVAMRRHAGTRGGESIFDLLRRLDIAPLPNTAGCRTAREAVLTARMAREALGTTWVKVEVIADEHTLLPDVVETLDATELLAAEGFTVLAYTSDDPVAAQRLEDAGAAAVMPLGAPIGTGLGILNPHNLELICSRASVPVLVDAGIGTASDAALAMELGCSGVLLASAVNRCQNPEAMATAMRHAVEAGRLARSAGRIPEREHAQASSTFEGLASWADQVL</sequence>
<dbReference type="EC" id="2.8.1.10" evidence="1"/>
<dbReference type="EMBL" id="CP001601">
    <property type="protein sequence ID" value="ACP33170.1"/>
    <property type="molecule type" value="Genomic_DNA"/>
</dbReference>
<dbReference type="RefSeq" id="WP_010190414.1">
    <property type="nucleotide sequence ID" value="NC_012590.1"/>
</dbReference>
<dbReference type="SMR" id="C3PH66"/>
<dbReference type="STRING" id="548476.cauri_1577"/>
<dbReference type="GeneID" id="31924207"/>
<dbReference type="KEGG" id="car:cauri_1577"/>
<dbReference type="eggNOG" id="COG2022">
    <property type="taxonomic scope" value="Bacteria"/>
</dbReference>
<dbReference type="HOGENOM" id="CLU_062233_1_0_11"/>
<dbReference type="OrthoDB" id="9805935at2"/>
<dbReference type="UniPathway" id="UPA00060"/>
<dbReference type="Proteomes" id="UP000002077">
    <property type="component" value="Chromosome"/>
</dbReference>
<dbReference type="GO" id="GO:0005737">
    <property type="term" value="C:cytoplasm"/>
    <property type="evidence" value="ECO:0007669"/>
    <property type="project" value="UniProtKB-SubCell"/>
</dbReference>
<dbReference type="GO" id="GO:1990107">
    <property type="term" value="F:thiazole synthase activity"/>
    <property type="evidence" value="ECO:0007669"/>
    <property type="project" value="UniProtKB-EC"/>
</dbReference>
<dbReference type="GO" id="GO:0009229">
    <property type="term" value="P:thiamine diphosphate biosynthetic process"/>
    <property type="evidence" value="ECO:0007669"/>
    <property type="project" value="UniProtKB-UniRule"/>
</dbReference>
<dbReference type="CDD" id="cd04728">
    <property type="entry name" value="ThiG"/>
    <property type="match status" value="1"/>
</dbReference>
<dbReference type="Gene3D" id="3.20.20.70">
    <property type="entry name" value="Aldolase class I"/>
    <property type="match status" value="1"/>
</dbReference>
<dbReference type="HAMAP" id="MF_00443">
    <property type="entry name" value="ThiG"/>
    <property type="match status" value="1"/>
</dbReference>
<dbReference type="InterPro" id="IPR013785">
    <property type="entry name" value="Aldolase_TIM"/>
</dbReference>
<dbReference type="InterPro" id="IPR033983">
    <property type="entry name" value="Thiazole_synthase_ThiG"/>
</dbReference>
<dbReference type="InterPro" id="IPR008867">
    <property type="entry name" value="ThiG"/>
</dbReference>
<dbReference type="PANTHER" id="PTHR34266">
    <property type="entry name" value="THIAZOLE SYNTHASE"/>
    <property type="match status" value="1"/>
</dbReference>
<dbReference type="PANTHER" id="PTHR34266:SF2">
    <property type="entry name" value="THIAZOLE SYNTHASE"/>
    <property type="match status" value="1"/>
</dbReference>
<dbReference type="Pfam" id="PF05690">
    <property type="entry name" value="ThiG"/>
    <property type="match status" value="1"/>
</dbReference>
<dbReference type="SUPFAM" id="SSF110399">
    <property type="entry name" value="ThiG-like"/>
    <property type="match status" value="1"/>
</dbReference>
<accession>C3PH66</accession>
<feature type="chain" id="PRO_1000196846" description="Thiazole synthase">
    <location>
        <begin position="1"/>
        <end position="259"/>
    </location>
</feature>
<feature type="active site" description="Schiff-base intermediate with DXP" evidence="1">
    <location>
        <position position="95"/>
    </location>
</feature>
<feature type="binding site" evidence="1">
    <location>
        <position position="156"/>
    </location>
    <ligand>
        <name>1-deoxy-D-xylulose 5-phosphate</name>
        <dbReference type="ChEBI" id="CHEBI:57792"/>
    </ligand>
</feature>
<feature type="binding site" evidence="1">
    <location>
        <begin position="182"/>
        <end position="183"/>
    </location>
    <ligand>
        <name>1-deoxy-D-xylulose 5-phosphate</name>
        <dbReference type="ChEBI" id="CHEBI:57792"/>
    </ligand>
</feature>
<feature type="binding site" evidence="1">
    <location>
        <begin position="204"/>
        <end position="205"/>
    </location>
    <ligand>
        <name>1-deoxy-D-xylulose 5-phosphate</name>
        <dbReference type="ChEBI" id="CHEBI:57792"/>
    </ligand>
</feature>